<name>PROS_MOUSE</name>
<reference key="1">
    <citation type="journal article" date="1994" name="Biochim. Biophys. Acta">
        <title>Cloning and sequencing of a cDNA encoding the murine vitamin K-dependent protein S.</title>
        <authorList>
            <person name="Chu M.D."/>
            <person name="Sun J."/>
            <person name="Bird P.I."/>
        </authorList>
    </citation>
    <scope>NUCLEOTIDE SEQUENCE [MRNA]</scope>
</reference>
<reference key="2">
    <citation type="journal article" date="1994" name="Thromb. Res. Suppl.">
        <title>Structure of mouse protein S as determined by PCR amplification and DNA sequencing of cDNA.</title>
        <authorList>
            <person name="Lu D."/>
            <person name="Schmidel D.K."/>
            <person name="Long G.L."/>
        </authorList>
    </citation>
    <scope>NUCLEOTIDE SEQUENCE [MRNA] OF 33-675</scope>
</reference>
<dbReference type="EMBL" id="Z25469">
    <property type="protein sequence ID" value="CAA80961.1"/>
    <property type="molecule type" value="mRNA"/>
</dbReference>
<dbReference type="EMBL" id="L27439">
    <property type="protein sequence ID" value="AAA40006.1"/>
    <property type="molecule type" value="mRNA"/>
</dbReference>
<dbReference type="CCDS" id="CCDS28263.1"/>
<dbReference type="PIR" id="S43504">
    <property type="entry name" value="KXMSS"/>
</dbReference>
<dbReference type="RefSeq" id="NP_035303.1">
    <property type="nucleotide sequence ID" value="NM_011173.3"/>
</dbReference>
<dbReference type="SMR" id="Q08761"/>
<dbReference type="FunCoup" id="Q08761">
    <property type="interactions" value="85"/>
</dbReference>
<dbReference type="STRING" id="10090.ENSMUSP00000023629"/>
<dbReference type="GlyCosmos" id="Q08761">
    <property type="glycosylation" value="2 sites, No reported glycans"/>
</dbReference>
<dbReference type="GlyGen" id="Q08761">
    <property type="glycosylation" value="2 sites"/>
</dbReference>
<dbReference type="iPTMnet" id="Q08761"/>
<dbReference type="PhosphoSitePlus" id="Q08761"/>
<dbReference type="CPTAC" id="non-CPTAC-3543"/>
<dbReference type="CPTAC" id="non-CPTAC-3934"/>
<dbReference type="jPOST" id="Q08761"/>
<dbReference type="PaxDb" id="10090-ENSMUSP00000023629"/>
<dbReference type="PeptideAtlas" id="Q08761"/>
<dbReference type="ProteomicsDB" id="291603"/>
<dbReference type="Pumba" id="Q08761"/>
<dbReference type="Antibodypedia" id="858">
    <property type="antibodies" value="456 antibodies from 40 providers"/>
</dbReference>
<dbReference type="DNASU" id="19128"/>
<dbReference type="Ensembl" id="ENSMUST00000023629.9">
    <property type="protein sequence ID" value="ENSMUSP00000023629.9"/>
    <property type="gene ID" value="ENSMUSG00000022912.9"/>
</dbReference>
<dbReference type="GeneID" id="19128"/>
<dbReference type="KEGG" id="mmu:19128"/>
<dbReference type="UCSC" id="uc007zpx.1">
    <property type="organism name" value="mouse"/>
</dbReference>
<dbReference type="AGR" id="MGI:1095733"/>
<dbReference type="CTD" id="5627"/>
<dbReference type="MGI" id="MGI:1095733">
    <property type="gene designation" value="Pros1"/>
</dbReference>
<dbReference type="VEuPathDB" id="HostDB:ENSMUSG00000022912"/>
<dbReference type="eggNOG" id="ENOG502QSNF">
    <property type="taxonomic scope" value="Eukaryota"/>
</dbReference>
<dbReference type="GeneTree" id="ENSGT00940000154035"/>
<dbReference type="HOGENOM" id="CLU_026236_0_0_1"/>
<dbReference type="InParanoid" id="Q08761"/>
<dbReference type="OMA" id="GQAAFTC"/>
<dbReference type="OrthoDB" id="4062651at2759"/>
<dbReference type="PhylomeDB" id="Q08761"/>
<dbReference type="TreeFam" id="TF352157"/>
<dbReference type="Reactome" id="R-MMU-114608">
    <property type="pathway name" value="Platelet degranulation"/>
</dbReference>
<dbReference type="Reactome" id="R-MMU-140837">
    <property type="pathway name" value="Intrinsic Pathway of Fibrin Clot Formation"/>
</dbReference>
<dbReference type="Reactome" id="R-MMU-140875">
    <property type="pathway name" value="Common Pathway of Fibrin Clot Formation"/>
</dbReference>
<dbReference type="Reactome" id="R-MMU-159740">
    <property type="pathway name" value="Gamma-carboxylation of protein precursors"/>
</dbReference>
<dbReference type="Reactome" id="R-MMU-159763">
    <property type="pathway name" value="Transport of gamma-carboxylated protein precursors from the endoplasmic reticulum to the Golgi apparatus"/>
</dbReference>
<dbReference type="Reactome" id="R-MMU-159782">
    <property type="pathway name" value="Removal of aminoterminal propeptides from gamma-carboxylated proteins"/>
</dbReference>
<dbReference type="Reactome" id="R-MMU-202733">
    <property type="pathway name" value="Cell surface interactions at the vascular wall"/>
</dbReference>
<dbReference type="BioGRID-ORCS" id="19128">
    <property type="hits" value="0 hits in 78 CRISPR screens"/>
</dbReference>
<dbReference type="ChiTaRS" id="Pros1">
    <property type="organism name" value="mouse"/>
</dbReference>
<dbReference type="PRO" id="PR:Q08761"/>
<dbReference type="Proteomes" id="UP000000589">
    <property type="component" value="Chromosome 16"/>
</dbReference>
<dbReference type="RNAct" id="Q08761">
    <property type="molecule type" value="protein"/>
</dbReference>
<dbReference type="Bgee" id="ENSMUSG00000022912">
    <property type="expression patterns" value="Expressed in cumulus cell and 259 other cell types or tissues"/>
</dbReference>
<dbReference type="ExpressionAtlas" id="Q08761">
    <property type="expression patterns" value="baseline and differential"/>
</dbReference>
<dbReference type="GO" id="GO:0005615">
    <property type="term" value="C:extracellular space"/>
    <property type="evidence" value="ECO:0007005"/>
    <property type="project" value="BHF-UCL"/>
</dbReference>
<dbReference type="GO" id="GO:0005509">
    <property type="term" value="F:calcium ion binding"/>
    <property type="evidence" value="ECO:0007669"/>
    <property type="project" value="InterPro"/>
</dbReference>
<dbReference type="GO" id="GO:0007596">
    <property type="term" value="P:blood coagulation"/>
    <property type="evidence" value="ECO:0007669"/>
    <property type="project" value="UniProtKB-KW"/>
</dbReference>
<dbReference type="GO" id="GO:0042730">
    <property type="term" value="P:fibrinolysis"/>
    <property type="evidence" value="ECO:0007669"/>
    <property type="project" value="UniProtKB-KW"/>
</dbReference>
<dbReference type="GO" id="GO:0051897">
    <property type="term" value="P:positive regulation of phosphatidylinositol 3-kinase/protein kinase B signal transduction"/>
    <property type="evidence" value="ECO:0000314"/>
    <property type="project" value="UniProtKB"/>
</dbReference>
<dbReference type="CDD" id="cd00054">
    <property type="entry name" value="EGF_CA"/>
    <property type="match status" value="3"/>
</dbReference>
<dbReference type="CDD" id="cd00110">
    <property type="entry name" value="LamG"/>
    <property type="match status" value="1"/>
</dbReference>
<dbReference type="FunFam" id="2.10.25.10:FF:000240">
    <property type="entry name" value="Vitamin K-dependent protein S"/>
    <property type="match status" value="1"/>
</dbReference>
<dbReference type="FunFam" id="2.10.25.10:FF:000426">
    <property type="entry name" value="Vitamin K-dependent protein S"/>
    <property type="match status" value="1"/>
</dbReference>
<dbReference type="FunFam" id="2.10.25.10:FF:000631">
    <property type="entry name" value="Vitamin K-dependent protein S"/>
    <property type="match status" value="1"/>
</dbReference>
<dbReference type="FunFam" id="2.60.120.200:FF:000129">
    <property type="entry name" value="Vitamin K-dependent protein S"/>
    <property type="match status" value="1"/>
</dbReference>
<dbReference type="FunFam" id="2.60.120.200:FF:000077">
    <property type="entry name" value="vitamin K-dependent protein S"/>
    <property type="match status" value="1"/>
</dbReference>
<dbReference type="FunFam" id="4.10.740.10:FF:000001">
    <property type="entry name" value="vitamin K-dependent protein S"/>
    <property type="match status" value="1"/>
</dbReference>
<dbReference type="Gene3D" id="2.60.120.200">
    <property type="match status" value="2"/>
</dbReference>
<dbReference type="Gene3D" id="4.10.740.10">
    <property type="entry name" value="Coagulation Factor IX"/>
    <property type="match status" value="1"/>
</dbReference>
<dbReference type="Gene3D" id="2.10.25.10">
    <property type="entry name" value="Laminin"/>
    <property type="match status" value="4"/>
</dbReference>
<dbReference type="InterPro" id="IPR017857">
    <property type="entry name" value="Coagulation_fac-like_Gla_dom"/>
</dbReference>
<dbReference type="InterPro" id="IPR013320">
    <property type="entry name" value="ConA-like_dom_sf"/>
</dbReference>
<dbReference type="InterPro" id="IPR001881">
    <property type="entry name" value="EGF-like_Ca-bd_dom"/>
</dbReference>
<dbReference type="InterPro" id="IPR000742">
    <property type="entry name" value="EGF-like_dom"/>
</dbReference>
<dbReference type="InterPro" id="IPR000152">
    <property type="entry name" value="EGF-type_Asp/Asn_hydroxyl_site"/>
</dbReference>
<dbReference type="InterPro" id="IPR018097">
    <property type="entry name" value="EGF_Ca-bd_CS"/>
</dbReference>
<dbReference type="InterPro" id="IPR051145">
    <property type="entry name" value="GAS-SHBG-PROS"/>
</dbReference>
<dbReference type="InterPro" id="IPR035972">
    <property type="entry name" value="GLA-like_dom_SF"/>
</dbReference>
<dbReference type="InterPro" id="IPR000294">
    <property type="entry name" value="GLA_domain"/>
</dbReference>
<dbReference type="InterPro" id="IPR009030">
    <property type="entry name" value="Growth_fac_rcpt_cys_sf"/>
</dbReference>
<dbReference type="InterPro" id="IPR001791">
    <property type="entry name" value="Laminin_G"/>
</dbReference>
<dbReference type="InterPro" id="IPR049883">
    <property type="entry name" value="NOTCH1_EGF-like"/>
</dbReference>
<dbReference type="PANTHER" id="PTHR24040">
    <property type="entry name" value="LAMININ G-LIKE DOMAIN-CONTAINING PROTEIN"/>
    <property type="match status" value="1"/>
</dbReference>
<dbReference type="PANTHER" id="PTHR24040:SF0">
    <property type="entry name" value="VITAMIN K-DEPENDENT PROTEIN S"/>
    <property type="match status" value="1"/>
</dbReference>
<dbReference type="Pfam" id="PF07645">
    <property type="entry name" value="EGF_CA"/>
    <property type="match status" value="2"/>
</dbReference>
<dbReference type="Pfam" id="PF14670">
    <property type="entry name" value="FXa_inhibition"/>
    <property type="match status" value="1"/>
</dbReference>
<dbReference type="Pfam" id="PF00594">
    <property type="entry name" value="Gla"/>
    <property type="match status" value="1"/>
</dbReference>
<dbReference type="Pfam" id="PF00054">
    <property type="entry name" value="Laminin_G_1"/>
    <property type="match status" value="1"/>
</dbReference>
<dbReference type="PRINTS" id="PR00001">
    <property type="entry name" value="GLABLOOD"/>
</dbReference>
<dbReference type="SMART" id="SM00181">
    <property type="entry name" value="EGF"/>
    <property type="match status" value="4"/>
</dbReference>
<dbReference type="SMART" id="SM00179">
    <property type="entry name" value="EGF_CA"/>
    <property type="match status" value="4"/>
</dbReference>
<dbReference type="SMART" id="SM00069">
    <property type="entry name" value="GLA"/>
    <property type="match status" value="1"/>
</dbReference>
<dbReference type="SMART" id="SM00282">
    <property type="entry name" value="LamG"/>
    <property type="match status" value="2"/>
</dbReference>
<dbReference type="SUPFAM" id="SSF49899">
    <property type="entry name" value="Concanavalin A-like lectins/glucanases"/>
    <property type="match status" value="2"/>
</dbReference>
<dbReference type="SUPFAM" id="SSF57630">
    <property type="entry name" value="GLA-domain"/>
    <property type="match status" value="1"/>
</dbReference>
<dbReference type="SUPFAM" id="SSF57184">
    <property type="entry name" value="Growth factor receptor domain"/>
    <property type="match status" value="1"/>
</dbReference>
<dbReference type="PROSITE" id="PS00010">
    <property type="entry name" value="ASX_HYDROXYL"/>
    <property type="match status" value="4"/>
</dbReference>
<dbReference type="PROSITE" id="PS00022">
    <property type="entry name" value="EGF_1"/>
    <property type="match status" value="1"/>
</dbReference>
<dbReference type="PROSITE" id="PS01186">
    <property type="entry name" value="EGF_2"/>
    <property type="match status" value="3"/>
</dbReference>
<dbReference type="PROSITE" id="PS50026">
    <property type="entry name" value="EGF_3"/>
    <property type="match status" value="4"/>
</dbReference>
<dbReference type="PROSITE" id="PS01187">
    <property type="entry name" value="EGF_CA"/>
    <property type="match status" value="3"/>
</dbReference>
<dbReference type="PROSITE" id="PS00011">
    <property type="entry name" value="GLA_1"/>
    <property type="match status" value="1"/>
</dbReference>
<dbReference type="PROSITE" id="PS50998">
    <property type="entry name" value="GLA_2"/>
    <property type="match status" value="1"/>
</dbReference>
<dbReference type="PROSITE" id="PS50025">
    <property type="entry name" value="LAM_G_DOMAIN"/>
    <property type="match status" value="2"/>
</dbReference>
<feature type="signal peptide" evidence="1">
    <location>
        <begin position="1"/>
        <end position="24"/>
    </location>
</feature>
<feature type="propeptide" id="PRO_0000022123" evidence="1">
    <location>
        <begin position="25"/>
        <end position="41"/>
    </location>
</feature>
<feature type="chain" id="PRO_0000022124" description="Vitamin K-dependent protein S">
    <location>
        <begin position="42"/>
        <end position="675"/>
    </location>
</feature>
<feature type="domain" description="Gla" evidence="6">
    <location>
        <begin position="42"/>
        <end position="87"/>
    </location>
</feature>
<feature type="domain" description="EGF-like 1" evidence="4">
    <location>
        <begin position="117"/>
        <end position="155"/>
    </location>
</feature>
<feature type="domain" description="EGF-like 2; calcium-binding" evidence="4">
    <location>
        <begin position="157"/>
        <end position="200"/>
    </location>
</feature>
<feature type="domain" description="EGF-like 3; calcium-binding" evidence="4">
    <location>
        <begin position="201"/>
        <end position="242"/>
    </location>
</feature>
<feature type="domain" description="EGF-like 4; calcium-binding" evidence="4">
    <location>
        <begin position="243"/>
        <end position="283"/>
    </location>
</feature>
<feature type="domain" description="Laminin G-like 1" evidence="5">
    <location>
        <begin position="299"/>
        <end position="475"/>
    </location>
</feature>
<feature type="domain" description="Laminin G-like 2" evidence="5">
    <location>
        <begin position="484"/>
        <end position="665"/>
    </location>
</feature>
<feature type="region of interest" description="Thrombin-sensitive">
    <location>
        <begin position="88"/>
        <end position="116"/>
    </location>
</feature>
<feature type="modified residue" description="4-carboxyglutamate" evidence="2 6">
    <location>
        <position position="47"/>
    </location>
</feature>
<feature type="modified residue" description="4-carboxyglutamate" evidence="2 6">
    <location>
        <position position="48"/>
    </location>
</feature>
<feature type="modified residue" description="4-carboxyglutamate" evidence="2 6">
    <location>
        <position position="55"/>
    </location>
</feature>
<feature type="modified residue" description="4-carboxyglutamate" evidence="2 6">
    <location>
        <position position="57"/>
    </location>
</feature>
<feature type="modified residue" description="4-carboxyglutamate" evidence="2 6">
    <location>
        <position position="60"/>
    </location>
</feature>
<feature type="modified residue" description="4-carboxyglutamate" evidence="2 6">
    <location>
        <position position="61"/>
    </location>
</feature>
<feature type="modified residue" description="4-carboxyglutamate" evidence="2 6">
    <location>
        <position position="66"/>
    </location>
</feature>
<feature type="modified residue" description="4-carboxyglutamate" evidence="2 6">
    <location>
        <position position="67"/>
    </location>
</feature>
<feature type="modified residue" description="4-carboxyglutamate" evidence="2 6">
    <location>
        <position position="70"/>
    </location>
</feature>
<feature type="modified residue" description="4-carboxyglutamate" evidence="2 6">
    <location>
        <position position="73"/>
    </location>
</feature>
<feature type="modified residue" description="4-carboxyglutamate" evidence="2 6">
    <location>
        <position position="77"/>
    </location>
</feature>
<feature type="modified residue" description="(3R)-3-hydroxyaspartate" evidence="1">
    <location>
        <position position="136"/>
    </location>
</feature>
<feature type="glycosylation site" description="N-linked (GlcNAc...) asparagine" evidence="3">
    <location>
        <position position="499"/>
    </location>
</feature>
<feature type="glycosylation site" description="N-linked (GlcNAc...) asparagine" evidence="3">
    <location>
        <position position="509"/>
    </location>
</feature>
<feature type="disulfide bond" evidence="1">
    <location>
        <begin position="58"/>
        <end position="63"/>
    </location>
</feature>
<feature type="disulfide bond" evidence="1">
    <location>
        <begin position="121"/>
        <end position="134"/>
    </location>
</feature>
<feature type="disulfide bond" evidence="1">
    <location>
        <begin position="126"/>
        <end position="143"/>
    </location>
</feature>
<feature type="disulfide bond" evidence="1">
    <location>
        <begin position="145"/>
        <end position="154"/>
    </location>
</feature>
<feature type="disulfide bond" evidence="1">
    <location>
        <begin position="161"/>
        <end position="175"/>
    </location>
</feature>
<feature type="disulfide bond" evidence="1">
    <location>
        <begin position="171"/>
        <end position="184"/>
    </location>
</feature>
<feature type="disulfide bond" evidence="1">
    <location>
        <begin position="186"/>
        <end position="199"/>
    </location>
</feature>
<feature type="disulfide bond" evidence="1">
    <location>
        <begin position="205"/>
        <end position="217"/>
    </location>
</feature>
<feature type="disulfide bond" evidence="1">
    <location>
        <begin position="212"/>
        <end position="226"/>
    </location>
</feature>
<feature type="disulfide bond" evidence="1">
    <location>
        <begin position="228"/>
        <end position="241"/>
    </location>
</feature>
<feature type="disulfide bond" evidence="1">
    <location>
        <begin position="247"/>
        <end position="256"/>
    </location>
</feature>
<feature type="disulfide bond" evidence="1">
    <location>
        <begin position="252"/>
        <end position="265"/>
    </location>
</feature>
<feature type="disulfide bond" evidence="1">
    <location>
        <begin position="267"/>
        <end position="282"/>
    </location>
</feature>
<feature type="disulfide bond" evidence="1">
    <location>
        <begin position="449"/>
        <end position="475"/>
    </location>
</feature>
<feature type="disulfide bond" evidence="1">
    <location>
        <begin position="638"/>
        <end position="665"/>
    </location>
</feature>
<feature type="sequence conflict" description="In Ref. 2; AAA40006." evidence="7" ref="2">
    <original>F</original>
    <variation>L</variation>
    <location>
        <position position="493"/>
    </location>
</feature>
<evidence type="ECO:0000250" key="1"/>
<evidence type="ECO:0000250" key="2">
    <source>
        <dbReference type="UniProtKB" id="P07224"/>
    </source>
</evidence>
<evidence type="ECO:0000255" key="3"/>
<evidence type="ECO:0000255" key="4">
    <source>
        <dbReference type="PROSITE-ProRule" id="PRU00076"/>
    </source>
</evidence>
<evidence type="ECO:0000255" key="5">
    <source>
        <dbReference type="PROSITE-ProRule" id="PRU00122"/>
    </source>
</evidence>
<evidence type="ECO:0000255" key="6">
    <source>
        <dbReference type="PROSITE-ProRule" id="PRU00463"/>
    </source>
</evidence>
<evidence type="ECO:0000305" key="7"/>
<gene>
    <name type="primary">Pros1</name>
    <name type="synonym">Pros</name>
</gene>
<keyword id="KW-0094">Blood coagulation</keyword>
<keyword id="KW-0106">Calcium</keyword>
<keyword id="KW-0165">Cleavage on pair of basic residues</keyword>
<keyword id="KW-1015">Disulfide bond</keyword>
<keyword id="KW-0245">EGF-like domain</keyword>
<keyword id="KW-0280">Fibrinolysis</keyword>
<keyword id="KW-0301">Gamma-carboxyglutamic acid</keyword>
<keyword id="KW-0325">Glycoprotein</keyword>
<keyword id="KW-0356">Hemostasis</keyword>
<keyword id="KW-0379">Hydroxylation</keyword>
<keyword id="KW-1185">Reference proteome</keyword>
<keyword id="KW-0677">Repeat</keyword>
<keyword id="KW-0964">Secreted</keyword>
<keyword id="KW-0732">Signal</keyword>
<keyword id="KW-0865">Zymogen</keyword>
<protein>
    <recommendedName>
        <fullName>Vitamin K-dependent protein S</fullName>
    </recommendedName>
</protein>
<comment type="function">
    <text>Anticoagulant plasma protein; it is a cofactor to activated protein C in the degradation of coagulation factors Va and VIIIa. It helps to prevent coagulation and stimulating fibrinolysis.</text>
</comment>
<comment type="subcellular location">
    <subcellularLocation>
        <location>Secreted</location>
    </subcellularLocation>
</comment>
<comment type="tissue specificity">
    <text>Plasma.</text>
</comment>
<comment type="PTM">
    <text evidence="1">The iron and 2-oxoglutarate dependent 3-hydroxylation of aspartate and asparagine is (R) stereospecific within EGF domains.</text>
</comment>
<organism>
    <name type="scientific">Mus musculus</name>
    <name type="common">Mouse</name>
    <dbReference type="NCBI Taxonomy" id="10090"/>
    <lineage>
        <taxon>Eukaryota</taxon>
        <taxon>Metazoa</taxon>
        <taxon>Chordata</taxon>
        <taxon>Craniata</taxon>
        <taxon>Vertebrata</taxon>
        <taxon>Euteleostomi</taxon>
        <taxon>Mammalia</taxon>
        <taxon>Eutheria</taxon>
        <taxon>Euarchontoglires</taxon>
        <taxon>Glires</taxon>
        <taxon>Rodentia</taxon>
        <taxon>Myomorpha</taxon>
        <taxon>Muroidea</taxon>
        <taxon>Muridae</taxon>
        <taxon>Murinae</taxon>
        <taxon>Mus</taxon>
        <taxon>Mus</taxon>
    </lineage>
</organism>
<proteinExistence type="evidence at transcript level"/>
<sequence length="675" mass="74934">MRVLSARFRVLLACLALVIPVSETNFLSKERASQVLVRKRRANTLFEETMKGNLERECIEELCNKEEAREVFENNPETDYFYPKYLGCLGAFRVGSFHAARQSANAYPDLRSCVKAISDQCDPIPCNEDGYLACQDGQAAFTCFCKPGWQGDRCQYDVNECKDPSNVNGGCSQICDNTPGSYHCSCKRGFAMLPNKKDCKDLDECALKPSVCGTAVCKNIPGDFECECPDGYRYDPSSKSCKDVDECSENMCAQLCVNFPGGYSCYCDGKKGFKLAQDQKSCEGIPVCLSLDLDKNYELLYLAEQFAGVVLYLKFRLPDITRFSAEFDFRTYDSEGIILYAESLDHSNWLLIALRDGKIEVQFKNEFSTQITTGGNVINNGIWNMVSVEELDDSVSIKIAKEAVMNINKLGSLFKPTDGFLDTKIYFAGLPRKVESALIKPINPRLDGCIRGWNLMKQGALGAKEIIEGKQNKHCFLNVEKGSYYPGSGIAQFSIDYNNVTNAEGWQMNVTLNIRPSTGTGVMLALVSGGTVPFALSLVDSRSGTSQDIVVFVENSVVARLEAVSLCSDQQSQLKCNVNRNGLELWTPLRKDVIYSKDLQRQLAVLDKAMKRTVATYLGGIPDISFSATPVNAFYSGCMEVNINGVQLDLDEAISKHKDIRAHSCPSVRKIQKNF</sequence>
<accession>Q08761</accession>
<accession>P43483</accession>